<name>MAM4_SCHPO</name>
<comment type="function">
    <text evidence="4">Mediates C-terminal methylation of the isoprenylated C-terminal cysteine in M-factor.</text>
</comment>
<comment type="catalytic activity">
    <reaction evidence="4">
        <text>[protein]-C-terminal S-[(2E,6E)-farnesyl]-L-cysteine + S-adenosyl-L-methionine = [protein]-C-terminal S-[(2E,6E)-farnesyl]-L-cysteine methyl ester + S-adenosyl-L-homocysteine</text>
        <dbReference type="Rhea" id="RHEA:21672"/>
        <dbReference type="Rhea" id="RHEA-COMP:12125"/>
        <dbReference type="Rhea" id="RHEA-COMP:12126"/>
        <dbReference type="ChEBI" id="CHEBI:57856"/>
        <dbReference type="ChEBI" id="CHEBI:59789"/>
        <dbReference type="ChEBI" id="CHEBI:90510"/>
        <dbReference type="ChEBI" id="CHEBI:90511"/>
        <dbReference type="EC" id="2.1.1.100"/>
    </reaction>
    <physiologicalReaction direction="left-to-right" evidence="4">
        <dbReference type="Rhea" id="RHEA:21673"/>
    </physiologicalReaction>
</comment>
<comment type="subcellular location">
    <subcellularLocation>
        <location evidence="4">Membrane</location>
        <topology evidence="3">Multi-pass membrane protein</topology>
    </subcellularLocation>
</comment>
<comment type="similarity">
    <text evidence="5">Belongs to the class VI-like SAM-binding methyltransferase superfamily. Isoprenylcysteine carboxyl methyltransferase family.</text>
</comment>
<sequence>MGNLHTSIAVASICLTSAFLGCVFGLGFFVWIIYGYSIGGFFAFLSLFHLLEFYITARFQGSQLSWDSFILNNGKAYWLAMLVGLLECLLSGGKSFAKVINCLRFPSFLINFIFSVYQTSALGFLCLGQYLRSSAMVQAGQSFSHIVASKRNKDHLLVTDGIYAYVRHPSYVGFFIWALGTQMLLGNFVSTLLFSLVLWKFFSQRITTEEAYLVSFFGDSYEQYRKKVPSGIPLIP</sequence>
<accession>P87014</accession>
<proteinExistence type="evidence at protein level"/>
<organism>
    <name type="scientific">Schizosaccharomyces pombe (strain 972 / ATCC 24843)</name>
    <name type="common">Fission yeast</name>
    <dbReference type="NCBI Taxonomy" id="284812"/>
    <lineage>
        <taxon>Eukaryota</taxon>
        <taxon>Fungi</taxon>
        <taxon>Dikarya</taxon>
        <taxon>Ascomycota</taxon>
        <taxon>Taphrinomycotina</taxon>
        <taxon>Schizosaccharomycetes</taxon>
        <taxon>Schizosaccharomycetales</taxon>
        <taxon>Schizosaccharomycetaceae</taxon>
        <taxon>Schizosaccharomyces</taxon>
    </lineage>
</organism>
<reference key="1">
    <citation type="journal article" date="1997" name="Mol. Cell. Biol.">
        <title>Genes encoding farnesyl cysteine carboxyl methyltransferase in Schizosaccharomyces pombe and Xenopus laevis.</title>
        <authorList>
            <person name="Imai Y."/>
            <person name="Davey J."/>
            <person name="Kawagishi-Kobayashi M."/>
            <person name="Yamamoto M."/>
        </authorList>
    </citation>
    <scope>NUCLEOTIDE SEQUENCE [GENOMIC DNA]</scope>
    <scope>FUNCTION</scope>
    <scope>CATALYTIC ACTIVITY</scope>
    <scope>SUBCELLULAR LOCATION</scope>
</reference>
<reference key="2">
    <citation type="journal article" date="2002" name="Nature">
        <title>The genome sequence of Schizosaccharomyces pombe.</title>
        <authorList>
            <person name="Wood V."/>
            <person name="Gwilliam R."/>
            <person name="Rajandream M.A."/>
            <person name="Lyne M.H."/>
            <person name="Lyne R."/>
            <person name="Stewart A."/>
            <person name="Sgouros J.G."/>
            <person name="Peat N."/>
            <person name="Hayles J."/>
            <person name="Baker S.G."/>
            <person name="Basham D."/>
            <person name="Bowman S."/>
            <person name="Brooks K."/>
            <person name="Brown D."/>
            <person name="Brown S."/>
            <person name="Chillingworth T."/>
            <person name="Churcher C.M."/>
            <person name="Collins M."/>
            <person name="Connor R."/>
            <person name="Cronin A."/>
            <person name="Davis P."/>
            <person name="Feltwell T."/>
            <person name="Fraser A."/>
            <person name="Gentles S."/>
            <person name="Goble A."/>
            <person name="Hamlin N."/>
            <person name="Harris D.E."/>
            <person name="Hidalgo J."/>
            <person name="Hodgson G."/>
            <person name="Holroyd S."/>
            <person name="Hornsby T."/>
            <person name="Howarth S."/>
            <person name="Huckle E.J."/>
            <person name="Hunt S."/>
            <person name="Jagels K."/>
            <person name="James K.D."/>
            <person name="Jones L."/>
            <person name="Jones M."/>
            <person name="Leather S."/>
            <person name="McDonald S."/>
            <person name="McLean J."/>
            <person name="Mooney P."/>
            <person name="Moule S."/>
            <person name="Mungall K.L."/>
            <person name="Murphy L.D."/>
            <person name="Niblett D."/>
            <person name="Odell C."/>
            <person name="Oliver K."/>
            <person name="O'Neil S."/>
            <person name="Pearson D."/>
            <person name="Quail M.A."/>
            <person name="Rabbinowitsch E."/>
            <person name="Rutherford K.M."/>
            <person name="Rutter S."/>
            <person name="Saunders D."/>
            <person name="Seeger K."/>
            <person name="Sharp S."/>
            <person name="Skelton J."/>
            <person name="Simmonds M.N."/>
            <person name="Squares R."/>
            <person name="Squares S."/>
            <person name="Stevens K."/>
            <person name="Taylor K."/>
            <person name="Taylor R.G."/>
            <person name="Tivey A."/>
            <person name="Walsh S.V."/>
            <person name="Warren T."/>
            <person name="Whitehead S."/>
            <person name="Woodward J.R."/>
            <person name="Volckaert G."/>
            <person name="Aert R."/>
            <person name="Robben J."/>
            <person name="Grymonprez B."/>
            <person name="Weltjens I."/>
            <person name="Vanstreels E."/>
            <person name="Rieger M."/>
            <person name="Schaefer M."/>
            <person name="Mueller-Auer S."/>
            <person name="Gabel C."/>
            <person name="Fuchs M."/>
            <person name="Duesterhoeft A."/>
            <person name="Fritzc C."/>
            <person name="Holzer E."/>
            <person name="Moestl D."/>
            <person name="Hilbert H."/>
            <person name="Borzym K."/>
            <person name="Langer I."/>
            <person name="Beck A."/>
            <person name="Lehrach H."/>
            <person name="Reinhardt R."/>
            <person name="Pohl T.M."/>
            <person name="Eger P."/>
            <person name="Zimmermann W."/>
            <person name="Wedler H."/>
            <person name="Wambutt R."/>
            <person name="Purnelle B."/>
            <person name="Goffeau A."/>
            <person name="Cadieu E."/>
            <person name="Dreano S."/>
            <person name="Gloux S."/>
            <person name="Lelaure V."/>
            <person name="Mottier S."/>
            <person name="Galibert F."/>
            <person name="Aves S.J."/>
            <person name="Xiang Z."/>
            <person name="Hunt C."/>
            <person name="Moore K."/>
            <person name="Hurst S.M."/>
            <person name="Lucas M."/>
            <person name="Rochet M."/>
            <person name="Gaillardin C."/>
            <person name="Tallada V.A."/>
            <person name="Garzon A."/>
            <person name="Thode G."/>
            <person name="Daga R.R."/>
            <person name="Cruzado L."/>
            <person name="Jimenez J."/>
            <person name="Sanchez M."/>
            <person name="del Rey F."/>
            <person name="Benito J."/>
            <person name="Dominguez A."/>
            <person name="Revuelta J.L."/>
            <person name="Moreno S."/>
            <person name="Armstrong J."/>
            <person name="Forsburg S.L."/>
            <person name="Cerutti L."/>
            <person name="Lowe T."/>
            <person name="McCombie W.R."/>
            <person name="Paulsen I."/>
            <person name="Potashkin J."/>
            <person name="Shpakovski G.V."/>
            <person name="Ussery D."/>
            <person name="Barrell B.G."/>
            <person name="Nurse P."/>
        </authorList>
    </citation>
    <scope>NUCLEOTIDE SEQUENCE [LARGE SCALE GENOMIC DNA]</scope>
    <source>
        <strain>972 / ATCC 24843</strain>
    </source>
</reference>
<protein>
    <recommendedName>
        <fullName>Protein-S-isoprenylcysteine O-methyltransferase</fullName>
        <ecNumber evidence="4">2.1.1.100</ecNumber>
    </recommendedName>
    <alternativeName>
        <fullName>Isoprenylcysteine carboxylmethyltransferase</fullName>
    </alternativeName>
    <alternativeName>
        <fullName>Prenylated protein carboxyl methyltransferase</fullName>
        <shortName>PPMT</shortName>
    </alternativeName>
    <alternativeName>
        <fullName>Prenylcysteine carboxyl methyltransferase</fullName>
        <shortName>pcCMT</shortName>
    </alternativeName>
</protein>
<dbReference type="EC" id="2.1.1.100" evidence="4"/>
<dbReference type="EMBL" id="D87749">
    <property type="protein sequence ID" value="BAA18999.1"/>
    <property type="molecule type" value="Genomic_DNA"/>
</dbReference>
<dbReference type="EMBL" id="CU329670">
    <property type="protein sequence ID" value="CAA15725.1"/>
    <property type="molecule type" value="Genomic_DNA"/>
</dbReference>
<dbReference type="PIR" id="T43237">
    <property type="entry name" value="T43237"/>
</dbReference>
<dbReference type="RefSeq" id="NP_593263.1">
    <property type="nucleotide sequence ID" value="NM_001018660.2"/>
</dbReference>
<dbReference type="SMR" id="P87014"/>
<dbReference type="BioGRID" id="279420">
    <property type="interactions" value="5"/>
</dbReference>
<dbReference type="FunCoup" id="P87014">
    <property type="interactions" value="309"/>
</dbReference>
<dbReference type="STRING" id="284812.P87014"/>
<dbReference type="PaxDb" id="4896-SPAC10F6.12c.1"/>
<dbReference type="EnsemblFungi" id="SPAC10F6.12c.1">
    <property type="protein sequence ID" value="SPAC10F6.12c.1:pep"/>
    <property type="gene ID" value="SPAC10F6.12c"/>
</dbReference>
<dbReference type="GeneID" id="2542982"/>
<dbReference type="KEGG" id="spo:2542982"/>
<dbReference type="PomBase" id="SPAC10F6.12c">
    <property type="gene designation" value="mam4"/>
</dbReference>
<dbReference type="VEuPathDB" id="FungiDB:SPAC10F6.12c"/>
<dbReference type="eggNOG" id="KOG2628">
    <property type="taxonomic scope" value="Eukaryota"/>
</dbReference>
<dbReference type="HOGENOM" id="CLU_065200_0_2_1"/>
<dbReference type="InParanoid" id="P87014"/>
<dbReference type="OMA" id="GMVPQVW"/>
<dbReference type="PhylomeDB" id="P87014"/>
<dbReference type="Reactome" id="R-SPO-163841">
    <property type="pathway name" value="Gamma carboxylation, hypusinylation, hydroxylation, and arylsulfatase activation"/>
</dbReference>
<dbReference type="PRO" id="PR:P87014"/>
<dbReference type="Proteomes" id="UP000002485">
    <property type="component" value="Chromosome I"/>
</dbReference>
<dbReference type="GO" id="GO:0005783">
    <property type="term" value="C:endoplasmic reticulum"/>
    <property type="evidence" value="ECO:0007005"/>
    <property type="project" value="PomBase"/>
</dbReference>
<dbReference type="GO" id="GO:0005789">
    <property type="term" value="C:endoplasmic reticulum membrane"/>
    <property type="evidence" value="ECO:0000266"/>
    <property type="project" value="PomBase"/>
</dbReference>
<dbReference type="GO" id="GO:0004671">
    <property type="term" value="F:protein C-terminal S-isoprenylcysteine carboxyl O-methyltransferase activity"/>
    <property type="evidence" value="ECO:0000315"/>
    <property type="project" value="PomBase"/>
</dbReference>
<dbReference type="GO" id="GO:0032259">
    <property type="term" value="P:methylation"/>
    <property type="evidence" value="ECO:0007669"/>
    <property type="project" value="UniProtKB-KW"/>
</dbReference>
<dbReference type="GO" id="GO:0071432">
    <property type="term" value="P:peptide mating pheromone maturation involved in positive regulation of conjugation with cellular fusion"/>
    <property type="evidence" value="ECO:0000315"/>
    <property type="project" value="PomBase"/>
</dbReference>
<dbReference type="GO" id="GO:0007323">
    <property type="term" value="P:peptide pheromone maturation"/>
    <property type="evidence" value="ECO:0000318"/>
    <property type="project" value="GO_Central"/>
</dbReference>
<dbReference type="GO" id="GO:0019236">
    <property type="term" value="P:response to pheromone"/>
    <property type="evidence" value="ECO:0007669"/>
    <property type="project" value="UniProtKB-KW"/>
</dbReference>
<dbReference type="FunFam" id="1.20.120.1630:FF:000018">
    <property type="entry name" value="Protein-S-isoprenylcysteine O-methyltransferase"/>
    <property type="match status" value="1"/>
</dbReference>
<dbReference type="Gene3D" id="1.20.120.1630">
    <property type="match status" value="1"/>
</dbReference>
<dbReference type="InterPro" id="IPR007269">
    <property type="entry name" value="ICMT_MeTrfase"/>
</dbReference>
<dbReference type="InterPro" id="IPR025770">
    <property type="entry name" value="PPMT_MeTrfase"/>
</dbReference>
<dbReference type="PANTHER" id="PTHR12714">
    <property type="entry name" value="PROTEIN-S ISOPRENYLCYSTEINE O-METHYLTRANSFERASE"/>
    <property type="match status" value="1"/>
</dbReference>
<dbReference type="PANTHER" id="PTHR12714:SF9">
    <property type="entry name" value="PROTEIN-S-ISOPRENYLCYSTEINE O-METHYLTRANSFERASE"/>
    <property type="match status" value="1"/>
</dbReference>
<dbReference type="Pfam" id="PF04140">
    <property type="entry name" value="ICMT"/>
    <property type="match status" value="1"/>
</dbReference>
<dbReference type="PROSITE" id="PS51564">
    <property type="entry name" value="SAM_ICMT"/>
    <property type="match status" value="1"/>
</dbReference>
<gene>
    <name type="primary">mam4</name>
    <name type="ORF">SPAC10F6.12c</name>
</gene>
<evidence type="ECO:0000250" key="1">
    <source>
        <dbReference type="UniProtKB" id="D6WJ77"/>
    </source>
</evidence>
<evidence type="ECO:0000250" key="2">
    <source>
        <dbReference type="UniProtKB" id="Q8TMG0"/>
    </source>
</evidence>
<evidence type="ECO:0000255" key="3"/>
<evidence type="ECO:0000269" key="4">
    <source>
    </source>
</evidence>
<evidence type="ECO:0000305" key="5"/>
<feature type="chain" id="PRO_0000209898" description="Protein-S-isoprenylcysteine O-methyltransferase">
    <location>
        <begin position="1"/>
        <end position="236"/>
    </location>
</feature>
<feature type="transmembrane region" description="Helical" evidence="3">
    <location>
        <begin position="3"/>
        <end position="23"/>
    </location>
</feature>
<feature type="transmembrane region" description="Helical" evidence="3">
    <location>
        <begin position="24"/>
        <end position="44"/>
    </location>
</feature>
<feature type="transmembrane region" description="Helical" evidence="3">
    <location>
        <begin position="76"/>
        <end position="96"/>
    </location>
</feature>
<feature type="transmembrane region" description="Helical" evidence="3">
    <location>
        <begin position="108"/>
        <end position="128"/>
    </location>
</feature>
<feature type="transmembrane region" description="Helical" evidence="3">
    <location>
        <begin position="174"/>
        <end position="194"/>
    </location>
</feature>
<feature type="binding site" evidence="2">
    <location>
        <begin position="155"/>
        <end position="158"/>
    </location>
    <ligand>
        <name>S-adenosyl-L-methionine</name>
        <dbReference type="ChEBI" id="CHEBI:59789"/>
    </ligand>
</feature>
<feature type="binding site" evidence="2">
    <location>
        <position position="163"/>
    </location>
    <ligand>
        <name>S-adenosyl-L-methionine</name>
        <dbReference type="ChEBI" id="CHEBI:59789"/>
    </ligand>
</feature>
<feature type="binding site" evidence="2">
    <location>
        <begin position="168"/>
        <end position="171"/>
    </location>
    <ligand>
        <name>S-adenosyl-L-methionine</name>
        <dbReference type="ChEBI" id="CHEBI:59789"/>
    </ligand>
</feature>
<feature type="binding site" evidence="1">
    <location>
        <position position="205"/>
    </location>
    <ligand>
        <name>substrate</name>
    </ligand>
</feature>
<feature type="binding site" evidence="2">
    <location>
        <position position="209"/>
    </location>
    <ligand>
        <name>S-adenosyl-L-methionine</name>
        <dbReference type="ChEBI" id="CHEBI:59789"/>
    </ligand>
</feature>
<keyword id="KW-0472">Membrane</keyword>
<keyword id="KW-0489">Methyltransferase</keyword>
<keyword id="KW-0589">Pheromone response</keyword>
<keyword id="KW-1185">Reference proteome</keyword>
<keyword id="KW-0949">S-adenosyl-L-methionine</keyword>
<keyword id="KW-0808">Transferase</keyword>
<keyword id="KW-0812">Transmembrane</keyword>
<keyword id="KW-1133">Transmembrane helix</keyword>